<comment type="subcellular location">
    <subcellularLocation>
        <location evidence="1">Cytoplasm</location>
    </subcellularLocation>
</comment>
<comment type="similarity">
    <text evidence="1">Belongs to the TACO1 family.</text>
</comment>
<evidence type="ECO:0000255" key="1">
    <source>
        <dbReference type="HAMAP-Rule" id="MF_00693"/>
    </source>
</evidence>
<evidence type="ECO:0000256" key="2">
    <source>
        <dbReference type="SAM" id="MobiDB-lite"/>
    </source>
</evidence>
<protein>
    <recommendedName>
        <fullName evidence="1">Probable transcriptional regulatory protein Csac_0964</fullName>
    </recommendedName>
</protein>
<proteinExistence type="inferred from homology"/>
<gene>
    <name type="ordered locus">Csac_0964</name>
</gene>
<sequence length="242" mass="27614">MSGHSKWANIRHKKEKTDAQKGKIFSKLGRELMVVAKMYGPDPETNPKLRDVIAKAKANNMPMDKIMGFIKRAAGEIDTTGYEDITYEGYGPGGVAVIVEAMTNNRNRTAGEIRHIFDKNGGNLGQTGCVSWMFNRKGVIVIEKENFPDEDFVMEKALEYGAEDFASEEDVYEIITTPEDFSKVREGLEKEGFTFIRAQIEMIPQTTVRLSEEDAQKMRRLIDMLEDNDDVKEVYHNWEEEE</sequence>
<reference key="1">
    <citation type="submission" date="2007-04" db="EMBL/GenBank/DDBJ databases">
        <title>Genome sequence of the thermophilic hydrogen-producing bacterium Caldicellulosiruptor saccharolyticus DSM 8903.</title>
        <authorList>
            <person name="Copeland A."/>
            <person name="Lucas S."/>
            <person name="Lapidus A."/>
            <person name="Barry K."/>
            <person name="Detter J.C."/>
            <person name="Glavina del Rio T."/>
            <person name="Hammon N."/>
            <person name="Israni S."/>
            <person name="Dalin E."/>
            <person name="Tice H."/>
            <person name="Pitluck S."/>
            <person name="Kiss H."/>
            <person name="Brettin T."/>
            <person name="Bruce D."/>
            <person name="Han C."/>
            <person name="Schmutz J."/>
            <person name="Larimer F."/>
            <person name="Land M."/>
            <person name="Hauser L."/>
            <person name="Kyrpides N."/>
            <person name="Lykidis A."/>
            <person name="van de Werken H.J.G."/>
            <person name="Verhaart M.R.A."/>
            <person name="VanFossen A.L."/>
            <person name="Lewis D.L."/>
            <person name="Nichols J.D."/>
            <person name="Goorissen H.P."/>
            <person name="van Niel E.W.J."/>
            <person name="Stams F.J.M."/>
            <person name="Willquist K.U."/>
            <person name="Ward D.E."/>
            <person name="van der Oost J."/>
            <person name="Kelly R.M."/>
            <person name="Kengen S.M.W."/>
            <person name="Richardson P."/>
        </authorList>
    </citation>
    <scope>NUCLEOTIDE SEQUENCE [LARGE SCALE GENOMIC DNA]</scope>
    <source>
        <strain>ATCC 43494 / DSM 8903 / Tp8T 6331</strain>
    </source>
</reference>
<organism>
    <name type="scientific">Caldicellulosiruptor saccharolyticus (strain ATCC 43494 / DSM 8903 / Tp8T 6331)</name>
    <dbReference type="NCBI Taxonomy" id="351627"/>
    <lineage>
        <taxon>Bacteria</taxon>
        <taxon>Bacillati</taxon>
        <taxon>Bacillota</taxon>
        <taxon>Bacillota incertae sedis</taxon>
        <taxon>Caldicellulosiruptorales</taxon>
        <taxon>Caldicellulosiruptoraceae</taxon>
        <taxon>Caldicellulosiruptor</taxon>
    </lineage>
</organism>
<name>Y964_CALS8</name>
<feature type="chain" id="PRO_1000045288" description="Probable transcriptional regulatory protein Csac_0964">
    <location>
        <begin position="1"/>
        <end position="242"/>
    </location>
</feature>
<feature type="region of interest" description="Disordered" evidence="2">
    <location>
        <begin position="1"/>
        <end position="20"/>
    </location>
</feature>
<accession>A4XI43</accession>
<keyword id="KW-0963">Cytoplasm</keyword>
<keyword id="KW-0238">DNA-binding</keyword>
<keyword id="KW-0804">Transcription</keyword>
<keyword id="KW-0805">Transcription regulation</keyword>
<dbReference type="EMBL" id="CP000679">
    <property type="protein sequence ID" value="ABP66578.1"/>
    <property type="molecule type" value="Genomic_DNA"/>
</dbReference>
<dbReference type="RefSeq" id="WP_011916524.1">
    <property type="nucleotide sequence ID" value="NC_009437.1"/>
</dbReference>
<dbReference type="SMR" id="A4XI43"/>
<dbReference type="STRING" id="351627.Csac_0964"/>
<dbReference type="KEGG" id="csc:Csac_0964"/>
<dbReference type="eggNOG" id="COG0217">
    <property type="taxonomic scope" value="Bacteria"/>
</dbReference>
<dbReference type="HOGENOM" id="CLU_062974_2_2_9"/>
<dbReference type="OrthoDB" id="9781053at2"/>
<dbReference type="Proteomes" id="UP000000256">
    <property type="component" value="Chromosome"/>
</dbReference>
<dbReference type="GO" id="GO:0005829">
    <property type="term" value="C:cytosol"/>
    <property type="evidence" value="ECO:0007669"/>
    <property type="project" value="TreeGrafter"/>
</dbReference>
<dbReference type="GO" id="GO:0003677">
    <property type="term" value="F:DNA binding"/>
    <property type="evidence" value="ECO:0007669"/>
    <property type="project" value="UniProtKB-UniRule"/>
</dbReference>
<dbReference type="GO" id="GO:0006355">
    <property type="term" value="P:regulation of DNA-templated transcription"/>
    <property type="evidence" value="ECO:0007669"/>
    <property type="project" value="UniProtKB-UniRule"/>
</dbReference>
<dbReference type="FunFam" id="1.10.10.200:FF:000002">
    <property type="entry name" value="Probable transcriptional regulatory protein CLM62_37755"/>
    <property type="match status" value="1"/>
</dbReference>
<dbReference type="FunFam" id="3.30.70.980:FF:000002">
    <property type="entry name" value="Probable transcriptional regulatory protein YebC"/>
    <property type="match status" value="1"/>
</dbReference>
<dbReference type="Gene3D" id="1.10.10.200">
    <property type="match status" value="1"/>
</dbReference>
<dbReference type="Gene3D" id="3.30.70.980">
    <property type="match status" value="2"/>
</dbReference>
<dbReference type="HAMAP" id="MF_00693">
    <property type="entry name" value="Transcrip_reg_TACO1"/>
    <property type="match status" value="1"/>
</dbReference>
<dbReference type="InterPro" id="IPR017856">
    <property type="entry name" value="Integrase-like_N"/>
</dbReference>
<dbReference type="InterPro" id="IPR048300">
    <property type="entry name" value="TACO1_YebC-like_2nd/3rd_dom"/>
</dbReference>
<dbReference type="InterPro" id="IPR049083">
    <property type="entry name" value="TACO1_YebC_N"/>
</dbReference>
<dbReference type="InterPro" id="IPR002876">
    <property type="entry name" value="Transcrip_reg_TACO1-like"/>
</dbReference>
<dbReference type="InterPro" id="IPR026564">
    <property type="entry name" value="Transcrip_reg_TACO1-like_dom3"/>
</dbReference>
<dbReference type="InterPro" id="IPR029072">
    <property type="entry name" value="YebC-like"/>
</dbReference>
<dbReference type="NCBIfam" id="NF001030">
    <property type="entry name" value="PRK00110.1"/>
    <property type="match status" value="1"/>
</dbReference>
<dbReference type="NCBIfam" id="NF009044">
    <property type="entry name" value="PRK12378.1"/>
    <property type="match status" value="1"/>
</dbReference>
<dbReference type="NCBIfam" id="TIGR01033">
    <property type="entry name" value="YebC/PmpR family DNA-binding transcriptional regulator"/>
    <property type="match status" value="1"/>
</dbReference>
<dbReference type="PANTHER" id="PTHR12532:SF6">
    <property type="entry name" value="TRANSCRIPTIONAL REGULATORY PROTEIN YEBC-RELATED"/>
    <property type="match status" value="1"/>
</dbReference>
<dbReference type="PANTHER" id="PTHR12532">
    <property type="entry name" value="TRANSLATIONAL ACTIVATOR OF CYTOCHROME C OXIDASE 1"/>
    <property type="match status" value="1"/>
</dbReference>
<dbReference type="Pfam" id="PF20772">
    <property type="entry name" value="TACO1_YebC_N"/>
    <property type="match status" value="1"/>
</dbReference>
<dbReference type="Pfam" id="PF01709">
    <property type="entry name" value="Transcrip_reg"/>
    <property type="match status" value="1"/>
</dbReference>
<dbReference type="SUPFAM" id="SSF75625">
    <property type="entry name" value="YebC-like"/>
    <property type="match status" value="1"/>
</dbReference>